<name>GLPK_DEIRA</name>
<reference key="1">
    <citation type="journal article" date="1999" name="Science">
        <title>Genome sequence of the radioresistant bacterium Deinococcus radiodurans R1.</title>
        <authorList>
            <person name="White O."/>
            <person name="Eisen J.A."/>
            <person name="Heidelberg J.F."/>
            <person name="Hickey E.K."/>
            <person name="Peterson J.D."/>
            <person name="Dodson R.J."/>
            <person name="Haft D.H."/>
            <person name="Gwinn M.L."/>
            <person name="Nelson W.C."/>
            <person name="Richardson D.L."/>
            <person name="Moffat K.S."/>
            <person name="Qin H."/>
            <person name="Jiang L."/>
            <person name="Pamphile W."/>
            <person name="Crosby M."/>
            <person name="Shen M."/>
            <person name="Vamathevan J.J."/>
            <person name="Lam P."/>
            <person name="McDonald L.A."/>
            <person name="Utterback T.R."/>
            <person name="Zalewski C."/>
            <person name="Makarova K.S."/>
            <person name="Aravind L."/>
            <person name="Daly M.J."/>
            <person name="Minton K.W."/>
            <person name="Fleischmann R.D."/>
            <person name="Ketchum K.A."/>
            <person name="Nelson K.E."/>
            <person name="Salzberg S.L."/>
            <person name="Smith H.O."/>
            <person name="Venter J.C."/>
            <person name="Fraser C.M."/>
        </authorList>
    </citation>
    <scope>NUCLEOTIDE SEQUENCE [LARGE SCALE GENOMIC DNA]</scope>
    <source>
        <strain>ATCC 13939 / DSM 20539 / JCM 16871 / CCUG 27074 / LMG 4051 / NBRC 15346 / NCIMB 9279 / VKM B-1422 / R1</strain>
    </source>
</reference>
<dbReference type="EC" id="2.7.1.30" evidence="1"/>
<dbReference type="EMBL" id="AE000513">
    <property type="protein sequence ID" value="AAF11475.1"/>
    <property type="molecule type" value="Genomic_DNA"/>
</dbReference>
<dbReference type="PIR" id="G75337">
    <property type="entry name" value="G75337"/>
</dbReference>
<dbReference type="RefSeq" id="NP_295651.1">
    <property type="nucleotide sequence ID" value="NC_001263.1"/>
</dbReference>
<dbReference type="RefSeq" id="WP_010888563.1">
    <property type="nucleotide sequence ID" value="NC_001263.1"/>
</dbReference>
<dbReference type="SMR" id="Q9RT38"/>
<dbReference type="FunCoup" id="Q9RT38">
    <property type="interactions" value="333"/>
</dbReference>
<dbReference type="STRING" id="243230.DR_1928"/>
<dbReference type="PaxDb" id="243230-DR_1928"/>
<dbReference type="EnsemblBacteria" id="AAF11475">
    <property type="protein sequence ID" value="AAF11475"/>
    <property type="gene ID" value="DR_1928"/>
</dbReference>
<dbReference type="GeneID" id="69518167"/>
<dbReference type="KEGG" id="dra:DR_1928"/>
<dbReference type="PATRIC" id="fig|243230.17.peg.2146"/>
<dbReference type="eggNOG" id="COG0554">
    <property type="taxonomic scope" value="Bacteria"/>
</dbReference>
<dbReference type="HOGENOM" id="CLU_009281_2_3_0"/>
<dbReference type="InParanoid" id="Q9RT38"/>
<dbReference type="OrthoDB" id="9805576at2"/>
<dbReference type="UniPathway" id="UPA00618">
    <property type="reaction ID" value="UER00672"/>
</dbReference>
<dbReference type="Proteomes" id="UP000002524">
    <property type="component" value="Chromosome 1"/>
</dbReference>
<dbReference type="GO" id="GO:0005829">
    <property type="term" value="C:cytosol"/>
    <property type="evidence" value="ECO:0000318"/>
    <property type="project" value="GO_Central"/>
</dbReference>
<dbReference type="GO" id="GO:0005524">
    <property type="term" value="F:ATP binding"/>
    <property type="evidence" value="ECO:0007669"/>
    <property type="project" value="UniProtKB-UniRule"/>
</dbReference>
<dbReference type="GO" id="GO:0004370">
    <property type="term" value="F:glycerol kinase activity"/>
    <property type="evidence" value="ECO:0000250"/>
    <property type="project" value="UniProtKB"/>
</dbReference>
<dbReference type="GO" id="GO:0019563">
    <property type="term" value="P:glycerol catabolic process"/>
    <property type="evidence" value="ECO:0000318"/>
    <property type="project" value="GO_Central"/>
</dbReference>
<dbReference type="GO" id="GO:0006071">
    <property type="term" value="P:glycerol metabolic process"/>
    <property type="evidence" value="ECO:0000250"/>
    <property type="project" value="UniProtKB"/>
</dbReference>
<dbReference type="GO" id="GO:0006072">
    <property type="term" value="P:glycerol-3-phosphate metabolic process"/>
    <property type="evidence" value="ECO:0007669"/>
    <property type="project" value="InterPro"/>
</dbReference>
<dbReference type="CDD" id="cd07786">
    <property type="entry name" value="FGGY_EcGK_like"/>
    <property type="match status" value="1"/>
</dbReference>
<dbReference type="FunFam" id="3.30.420.40:FF:000007">
    <property type="entry name" value="Glycerol kinase"/>
    <property type="match status" value="1"/>
</dbReference>
<dbReference type="FunFam" id="3.30.420.40:FF:000008">
    <property type="entry name" value="Glycerol kinase"/>
    <property type="match status" value="1"/>
</dbReference>
<dbReference type="Gene3D" id="3.30.420.40">
    <property type="match status" value="2"/>
</dbReference>
<dbReference type="HAMAP" id="MF_00186">
    <property type="entry name" value="Glycerol_kin"/>
    <property type="match status" value="1"/>
</dbReference>
<dbReference type="InterPro" id="IPR043129">
    <property type="entry name" value="ATPase_NBD"/>
</dbReference>
<dbReference type="InterPro" id="IPR000577">
    <property type="entry name" value="Carb_kinase_FGGY"/>
</dbReference>
<dbReference type="InterPro" id="IPR018483">
    <property type="entry name" value="Carb_kinase_FGGY_CS"/>
</dbReference>
<dbReference type="InterPro" id="IPR018485">
    <property type="entry name" value="FGGY_C"/>
</dbReference>
<dbReference type="InterPro" id="IPR018484">
    <property type="entry name" value="FGGY_N"/>
</dbReference>
<dbReference type="InterPro" id="IPR005999">
    <property type="entry name" value="Glycerol_kin"/>
</dbReference>
<dbReference type="NCBIfam" id="TIGR01311">
    <property type="entry name" value="glycerol_kin"/>
    <property type="match status" value="1"/>
</dbReference>
<dbReference type="NCBIfam" id="NF000756">
    <property type="entry name" value="PRK00047.1"/>
    <property type="match status" value="1"/>
</dbReference>
<dbReference type="PANTHER" id="PTHR10196:SF69">
    <property type="entry name" value="GLYCEROL KINASE"/>
    <property type="match status" value="1"/>
</dbReference>
<dbReference type="PANTHER" id="PTHR10196">
    <property type="entry name" value="SUGAR KINASE"/>
    <property type="match status" value="1"/>
</dbReference>
<dbReference type="Pfam" id="PF02782">
    <property type="entry name" value="FGGY_C"/>
    <property type="match status" value="1"/>
</dbReference>
<dbReference type="Pfam" id="PF00370">
    <property type="entry name" value="FGGY_N"/>
    <property type="match status" value="1"/>
</dbReference>
<dbReference type="PIRSF" id="PIRSF000538">
    <property type="entry name" value="GlpK"/>
    <property type="match status" value="1"/>
</dbReference>
<dbReference type="SUPFAM" id="SSF53067">
    <property type="entry name" value="Actin-like ATPase domain"/>
    <property type="match status" value="2"/>
</dbReference>
<dbReference type="PROSITE" id="PS00933">
    <property type="entry name" value="FGGY_KINASES_1"/>
    <property type="match status" value="1"/>
</dbReference>
<dbReference type="PROSITE" id="PS00445">
    <property type="entry name" value="FGGY_KINASES_2"/>
    <property type="match status" value="1"/>
</dbReference>
<organism>
    <name type="scientific">Deinococcus radiodurans (strain ATCC 13939 / DSM 20539 / JCM 16871 / CCUG 27074 / LMG 4051 / NBRC 15346 / NCIMB 9279 / VKM B-1422 / R1)</name>
    <dbReference type="NCBI Taxonomy" id="243230"/>
    <lineage>
        <taxon>Bacteria</taxon>
        <taxon>Thermotogati</taxon>
        <taxon>Deinococcota</taxon>
        <taxon>Deinococci</taxon>
        <taxon>Deinococcales</taxon>
        <taxon>Deinococcaceae</taxon>
        <taxon>Deinococcus</taxon>
    </lineage>
</organism>
<protein>
    <recommendedName>
        <fullName evidence="1">Glycerol kinase</fullName>
        <ecNumber evidence="1">2.7.1.30</ecNumber>
    </recommendedName>
    <alternativeName>
        <fullName evidence="1">ATP:glycerol 3-phosphotransferase</fullName>
    </alternativeName>
    <alternativeName>
        <fullName evidence="1">Glycerokinase</fullName>
        <shortName evidence="1">GK</shortName>
    </alternativeName>
</protein>
<evidence type="ECO:0000255" key="1">
    <source>
        <dbReference type="HAMAP-Rule" id="MF_00186"/>
    </source>
</evidence>
<gene>
    <name evidence="1" type="primary">glpK</name>
    <name type="ordered locus">DR_1928</name>
</gene>
<feature type="chain" id="PRO_0000059450" description="Glycerol kinase">
    <location>
        <begin position="1"/>
        <end position="501"/>
    </location>
</feature>
<feature type="binding site" evidence="1">
    <location>
        <position position="14"/>
    </location>
    <ligand>
        <name>ADP</name>
        <dbReference type="ChEBI" id="CHEBI:456216"/>
    </ligand>
</feature>
<feature type="binding site" evidence="1">
    <location>
        <position position="14"/>
    </location>
    <ligand>
        <name>ATP</name>
        <dbReference type="ChEBI" id="CHEBI:30616"/>
    </ligand>
</feature>
<feature type="binding site" evidence="1">
    <location>
        <position position="14"/>
    </location>
    <ligand>
        <name>sn-glycerol 3-phosphate</name>
        <dbReference type="ChEBI" id="CHEBI:57597"/>
    </ligand>
</feature>
<feature type="binding site" evidence="1">
    <location>
        <position position="15"/>
    </location>
    <ligand>
        <name>ATP</name>
        <dbReference type="ChEBI" id="CHEBI:30616"/>
    </ligand>
</feature>
<feature type="binding site" evidence="1">
    <location>
        <position position="16"/>
    </location>
    <ligand>
        <name>ATP</name>
        <dbReference type="ChEBI" id="CHEBI:30616"/>
    </ligand>
</feature>
<feature type="binding site" evidence="1">
    <location>
        <position position="18"/>
    </location>
    <ligand>
        <name>ADP</name>
        <dbReference type="ChEBI" id="CHEBI:456216"/>
    </ligand>
</feature>
<feature type="binding site" evidence="1">
    <location>
        <position position="84"/>
    </location>
    <ligand>
        <name>glycerol</name>
        <dbReference type="ChEBI" id="CHEBI:17754"/>
    </ligand>
</feature>
<feature type="binding site" evidence="1">
    <location>
        <position position="84"/>
    </location>
    <ligand>
        <name>sn-glycerol 3-phosphate</name>
        <dbReference type="ChEBI" id="CHEBI:57597"/>
    </ligand>
</feature>
<feature type="binding site" evidence="1">
    <location>
        <position position="85"/>
    </location>
    <ligand>
        <name>glycerol</name>
        <dbReference type="ChEBI" id="CHEBI:17754"/>
    </ligand>
</feature>
<feature type="binding site" evidence="1">
    <location>
        <position position="85"/>
    </location>
    <ligand>
        <name>sn-glycerol 3-phosphate</name>
        <dbReference type="ChEBI" id="CHEBI:57597"/>
    </ligand>
</feature>
<feature type="binding site" evidence="1">
    <location>
        <position position="135"/>
    </location>
    <ligand>
        <name>glycerol</name>
        <dbReference type="ChEBI" id="CHEBI:17754"/>
    </ligand>
</feature>
<feature type="binding site" evidence="1">
    <location>
        <position position="135"/>
    </location>
    <ligand>
        <name>sn-glycerol 3-phosphate</name>
        <dbReference type="ChEBI" id="CHEBI:57597"/>
    </ligand>
</feature>
<feature type="binding site" evidence="1">
    <location>
        <position position="244"/>
    </location>
    <ligand>
        <name>glycerol</name>
        <dbReference type="ChEBI" id="CHEBI:17754"/>
    </ligand>
</feature>
<feature type="binding site" evidence="1">
    <location>
        <position position="244"/>
    </location>
    <ligand>
        <name>sn-glycerol 3-phosphate</name>
        <dbReference type="ChEBI" id="CHEBI:57597"/>
    </ligand>
</feature>
<feature type="binding site" evidence="1">
    <location>
        <position position="245"/>
    </location>
    <ligand>
        <name>glycerol</name>
        <dbReference type="ChEBI" id="CHEBI:17754"/>
    </ligand>
</feature>
<feature type="binding site" evidence="1">
    <location>
        <position position="266"/>
    </location>
    <ligand>
        <name>ADP</name>
        <dbReference type="ChEBI" id="CHEBI:456216"/>
    </ligand>
</feature>
<feature type="binding site" evidence="1">
    <location>
        <position position="266"/>
    </location>
    <ligand>
        <name>ATP</name>
        <dbReference type="ChEBI" id="CHEBI:30616"/>
    </ligand>
</feature>
<feature type="binding site" evidence="1">
    <location>
        <position position="309"/>
    </location>
    <ligand>
        <name>ADP</name>
        <dbReference type="ChEBI" id="CHEBI:456216"/>
    </ligand>
</feature>
<feature type="binding site" evidence="1">
    <location>
        <position position="309"/>
    </location>
    <ligand>
        <name>ATP</name>
        <dbReference type="ChEBI" id="CHEBI:30616"/>
    </ligand>
</feature>
<feature type="binding site" evidence="1">
    <location>
        <position position="313"/>
    </location>
    <ligand>
        <name>ATP</name>
        <dbReference type="ChEBI" id="CHEBI:30616"/>
    </ligand>
</feature>
<feature type="binding site" evidence="1">
    <location>
        <position position="410"/>
    </location>
    <ligand>
        <name>ADP</name>
        <dbReference type="ChEBI" id="CHEBI:456216"/>
    </ligand>
</feature>
<feature type="binding site" evidence="1">
    <location>
        <position position="410"/>
    </location>
    <ligand>
        <name>ATP</name>
        <dbReference type="ChEBI" id="CHEBI:30616"/>
    </ligand>
</feature>
<feature type="binding site" evidence="1">
    <location>
        <position position="414"/>
    </location>
    <ligand>
        <name>ADP</name>
        <dbReference type="ChEBI" id="CHEBI:456216"/>
    </ligand>
</feature>
<proteinExistence type="inferred from homology"/>
<comment type="function">
    <text evidence="1">Key enzyme in the regulation of glycerol uptake and metabolism. Catalyzes the phosphorylation of glycerol to yield sn-glycerol 3-phosphate.</text>
</comment>
<comment type="catalytic activity">
    <reaction evidence="1">
        <text>glycerol + ATP = sn-glycerol 3-phosphate + ADP + H(+)</text>
        <dbReference type="Rhea" id="RHEA:21644"/>
        <dbReference type="ChEBI" id="CHEBI:15378"/>
        <dbReference type="ChEBI" id="CHEBI:17754"/>
        <dbReference type="ChEBI" id="CHEBI:30616"/>
        <dbReference type="ChEBI" id="CHEBI:57597"/>
        <dbReference type="ChEBI" id="CHEBI:456216"/>
        <dbReference type="EC" id="2.7.1.30"/>
    </reaction>
</comment>
<comment type="activity regulation">
    <text evidence="1">Inhibited by fructose 1,6-bisphosphate (FBP).</text>
</comment>
<comment type="pathway">
    <text evidence="1">Polyol metabolism; glycerol degradation via glycerol kinase pathway; sn-glycerol 3-phosphate from glycerol: step 1/1.</text>
</comment>
<comment type="similarity">
    <text evidence="1">Belongs to the FGGY kinase family.</text>
</comment>
<keyword id="KW-0067">ATP-binding</keyword>
<keyword id="KW-0319">Glycerol metabolism</keyword>
<keyword id="KW-0418">Kinase</keyword>
<keyword id="KW-0547">Nucleotide-binding</keyword>
<keyword id="KW-1185">Reference proteome</keyword>
<keyword id="KW-0808">Transferase</keyword>
<sequence>MSEHQYILALDQGTTSSRAIVFDHQGNMKGVGQQEFRQHFPKPGWVEHDANEIWSTQIGVAQQALSNAGIRASDLAAIGITNQRETTLIWDRATGKPIHHAIVWQDRRTAPYCDSIRAQHEKTLQDKTGLVLDAYFSGTKVKWLLDNVPGARERAEKGELAFGTIDSWLVYNLTGGELHITDATNASRTLLYNIHTGEWDDELLRILDVPRSVLPEVRNSSEVYGKTAAGLLGAQVPIAGIGGDQQAATFGQACLERGMAKNTYGTGCFMLMNTEGEAVPSQNKLLTTVAWQLDGERTYALEGSVFIGGAVVQWLRDGLNIIRSSTEIEALARTVDSSEGVMLVPAFVGLGAPYWDAYARGTMVGITRGTTKAHIARAALEAVAYQSAELLEAMQKDSGVELKELRVDGGASTNDLMMQFQADILGVPVIRPKVTETTALGAAYLAGLAVGYWKSTDDIAHQWQEDKRFEPQMSEEERSKLMRRWKKAVARARDWEDDSEA</sequence>
<accession>Q9RT38</accession>